<keyword id="KW-0067">ATP-binding</keyword>
<keyword id="KW-0436">Ligase</keyword>
<keyword id="KW-0479">Metal-binding</keyword>
<keyword id="KW-0547">Nucleotide-binding</keyword>
<keyword id="KW-1185">Reference proteome</keyword>
<keyword id="KW-0862">Zinc</keyword>
<gene>
    <name type="primary">mshC</name>
    <name type="synonym">cysS2</name>
    <name type="ordered locus">Cgl1514</name>
    <name type="ordered locus">cg1709</name>
</gene>
<name>MSHC_CORGL</name>
<protein>
    <recommendedName>
        <fullName>L-cysteine:1D-myo-inositol 2-amino-2-deoxy-alpha-D-glucopyranoside ligase</fullName>
        <shortName>L-Cys:GlcN-Ins ligase</shortName>
        <ecNumber>6.3.1.13</ecNumber>
    </recommendedName>
    <alternativeName>
        <fullName>Mycothiol ligase</fullName>
        <shortName>MSH ligase</shortName>
    </alternativeName>
</protein>
<dbReference type="EC" id="6.3.1.13"/>
<dbReference type="EMBL" id="BA000036">
    <property type="protein sequence ID" value="BAB98907.1"/>
    <property type="molecule type" value="Genomic_DNA"/>
</dbReference>
<dbReference type="EMBL" id="BX927152">
    <property type="protein sequence ID" value="CAF21523.1"/>
    <property type="molecule type" value="Genomic_DNA"/>
</dbReference>
<dbReference type="RefSeq" id="NP_600730.1">
    <property type="nucleotide sequence ID" value="NC_003450.3"/>
</dbReference>
<dbReference type="SMR" id="Q8NQC4"/>
<dbReference type="STRING" id="196627.cg1709"/>
<dbReference type="KEGG" id="cgb:cg1709"/>
<dbReference type="KEGG" id="cgl:Cgl1514"/>
<dbReference type="PATRIC" id="fig|196627.13.peg.1482"/>
<dbReference type="eggNOG" id="COG0215">
    <property type="taxonomic scope" value="Bacteria"/>
</dbReference>
<dbReference type="HOGENOM" id="CLU_013528_0_0_11"/>
<dbReference type="OrthoDB" id="9815130at2"/>
<dbReference type="BioCyc" id="CORYNE:G18NG-11097-MONOMER"/>
<dbReference type="Proteomes" id="UP000000582">
    <property type="component" value="Chromosome"/>
</dbReference>
<dbReference type="Proteomes" id="UP000001009">
    <property type="component" value="Chromosome"/>
</dbReference>
<dbReference type="GO" id="GO:0005829">
    <property type="term" value="C:cytosol"/>
    <property type="evidence" value="ECO:0007669"/>
    <property type="project" value="TreeGrafter"/>
</dbReference>
<dbReference type="GO" id="GO:0005524">
    <property type="term" value="F:ATP binding"/>
    <property type="evidence" value="ECO:0007669"/>
    <property type="project" value="UniProtKB-KW"/>
</dbReference>
<dbReference type="GO" id="GO:0035446">
    <property type="term" value="F:cysteine-glucosaminylinositol ligase activity"/>
    <property type="evidence" value="ECO:0007669"/>
    <property type="project" value="UniProtKB-UniRule"/>
</dbReference>
<dbReference type="GO" id="GO:0004817">
    <property type="term" value="F:cysteine-tRNA ligase activity"/>
    <property type="evidence" value="ECO:0007669"/>
    <property type="project" value="TreeGrafter"/>
</dbReference>
<dbReference type="GO" id="GO:0008270">
    <property type="term" value="F:zinc ion binding"/>
    <property type="evidence" value="ECO:0007669"/>
    <property type="project" value="UniProtKB-UniRule"/>
</dbReference>
<dbReference type="GO" id="GO:0006423">
    <property type="term" value="P:cysteinyl-tRNA aminoacylation"/>
    <property type="evidence" value="ECO:0007669"/>
    <property type="project" value="TreeGrafter"/>
</dbReference>
<dbReference type="GO" id="GO:0010125">
    <property type="term" value="P:mycothiol biosynthetic process"/>
    <property type="evidence" value="ECO:0007669"/>
    <property type="project" value="UniProtKB-UniRule"/>
</dbReference>
<dbReference type="Gene3D" id="1.20.120.640">
    <property type="entry name" value="Anticodon-binding domain of a subclass of class I aminoacyl-tRNA synthetases"/>
    <property type="match status" value="1"/>
</dbReference>
<dbReference type="Gene3D" id="3.40.50.620">
    <property type="entry name" value="HUPs"/>
    <property type="match status" value="1"/>
</dbReference>
<dbReference type="HAMAP" id="MF_01697">
    <property type="entry name" value="MshC"/>
    <property type="match status" value="1"/>
</dbReference>
<dbReference type="InterPro" id="IPR024909">
    <property type="entry name" value="Cys-tRNA/MSH_ligase"/>
</dbReference>
<dbReference type="InterPro" id="IPR017812">
    <property type="entry name" value="Mycothiol_ligase_MshC"/>
</dbReference>
<dbReference type="InterPro" id="IPR014729">
    <property type="entry name" value="Rossmann-like_a/b/a_fold"/>
</dbReference>
<dbReference type="InterPro" id="IPR032678">
    <property type="entry name" value="tRNA-synt_1_cat_dom"/>
</dbReference>
<dbReference type="NCBIfam" id="TIGR03447">
    <property type="entry name" value="mycothiol_MshC"/>
    <property type="match status" value="1"/>
</dbReference>
<dbReference type="PANTHER" id="PTHR10890:SF3">
    <property type="entry name" value="CYSTEINE--TRNA LIGASE, CYTOPLASMIC"/>
    <property type="match status" value="1"/>
</dbReference>
<dbReference type="PANTHER" id="PTHR10890">
    <property type="entry name" value="CYSTEINYL-TRNA SYNTHETASE"/>
    <property type="match status" value="1"/>
</dbReference>
<dbReference type="Pfam" id="PF01406">
    <property type="entry name" value="tRNA-synt_1e"/>
    <property type="match status" value="1"/>
</dbReference>
<dbReference type="PRINTS" id="PR00983">
    <property type="entry name" value="TRNASYNTHCYS"/>
</dbReference>
<dbReference type="SUPFAM" id="SSF52374">
    <property type="entry name" value="Nucleotidylyl transferase"/>
    <property type="match status" value="1"/>
</dbReference>
<evidence type="ECO:0000250" key="1"/>
<evidence type="ECO:0000305" key="2"/>
<sequence>MPLELFDTADQEVRLVETPPAGSDTPVGMYVCGITPYDSTHLGHAATYLAFDLIYRILLDNDHDVHYVQNITDVDDPLFERAARDGVDWRDLGTSQINLFRSDMEALSIIPPKDYIGAIESIDEVIEMVKTLLDEGAAYIVEDAEYPDVYASINATDKFGYESNYDAATMAEFFAERGGDPERPGKKNPMDALLWRAAREGEPSWESPFGAGRPGWHIECSAIATNRLGHSFDIQGGGSDLIFPHHEFSAAHAEAAHGVERMAKHYVHAGMISQDGVKMSKSLGNLEFVSRLTAAGHEPGAIRLGVFANHYRGNRDWNAESLATAEQRLATWREAARAATNREDAIAVVEQLRAHLSADLDTPGALAAVDNWAAGIDTTTDSKEFTEVGNIVVAAIDALLGVQL</sequence>
<feature type="chain" id="PRO_0000159389" description="L-cysteine:1D-myo-inositol 2-amino-2-deoxy-alpha-D-glucopyranoside ligase">
    <location>
        <begin position="1"/>
        <end position="404"/>
    </location>
</feature>
<feature type="short sequence motif" description="'HIGH' region">
    <location>
        <begin position="34"/>
        <end position="44"/>
    </location>
</feature>
<feature type="short sequence motif" description="'ERGGDP' region">
    <location>
        <begin position="176"/>
        <end position="181"/>
    </location>
</feature>
<feature type="short sequence motif" description="'KMSKS' region">
    <location>
        <begin position="278"/>
        <end position="282"/>
    </location>
</feature>
<feature type="binding site" evidence="1">
    <location>
        <begin position="32"/>
        <end position="35"/>
    </location>
    <ligand>
        <name>L-cysteinyl-5'-AMP</name>
        <dbReference type="ChEBI" id="CHEBI:144924"/>
    </ligand>
</feature>
<feature type="binding site" evidence="1">
    <location>
        <position position="32"/>
    </location>
    <ligand>
        <name>Zn(2+)</name>
        <dbReference type="ChEBI" id="CHEBI:29105"/>
    </ligand>
</feature>
<feature type="binding site" evidence="1">
    <location>
        <position position="47"/>
    </location>
    <ligand>
        <name>L-cysteinyl-5'-AMP</name>
        <dbReference type="ChEBI" id="CHEBI:144924"/>
    </ligand>
</feature>
<feature type="binding site" evidence="1">
    <location>
        <begin position="70"/>
        <end position="72"/>
    </location>
    <ligand>
        <name>L-cysteinyl-5'-AMP</name>
        <dbReference type="ChEBI" id="CHEBI:144924"/>
    </ligand>
</feature>
<feature type="binding site" evidence="1">
    <location>
        <position position="216"/>
    </location>
    <ligand>
        <name>L-cysteinyl-5'-AMP</name>
        <dbReference type="ChEBI" id="CHEBI:144924"/>
    </ligand>
</feature>
<feature type="binding site" evidence="1">
    <location>
        <position position="220"/>
    </location>
    <ligand>
        <name>Zn(2+)</name>
        <dbReference type="ChEBI" id="CHEBI:29105"/>
    </ligand>
</feature>
<feature type="binding site" evidence="1">
    <location>
        <begin position="238"/>
        <end position="240"/>
    </location>
    <ligand>
        <name>L-cysteinyl-5'-AMP</name>
        <dbReference type="ChEBI" id="CHEBI:144924"/>
    </ligand>
</feature>
<feature type="binding site" evidence="1">
    <location>
        <position position="245"/>
    </location>
    <ligand>
        <name>Zn(2+)</name>
        <dbReference type="ChEBI" id="CHEBI:29105"/>
    </ligand>
</feature>
<feature type="binding site" evidence="1">
    <location>
        <position position="272"/>
    </location>
    <ligand>
        <name>L-cysteinyl-5'-AMP</name>
        <dbReference type="ChEBI" id="CHEBI:144924"/>
    </ligand>
</feature>
<proteinExistence type="inferred from homology"/>
<comment type="function">
    <text evidence="1">Catalyzes the ATP-dependent condensation of GlcN-Ins and L-cysteine to form L-Cys-GlcN-Ins.</text>
</comment>
<comment type="catalytic activity">
    <reaction>
        <text>1D-myo-inositol 2-amino-2-deoxy-alpha-D-glucopyranoside + L-cysteine + ATP = 1D-myo-inositol 2-(L-cysteinylamino)-2-deoxy-alpha-D-glucopyranoside + AMP + diphosphate + H(+)</text>
        <dbReference type="Rhea" id="RHEA:26176"/>
        <dbReference type="ChEBI" id="CHEBI:15378"/>
        <dbReference type="ChEBI" id="CHEBI:30616"/>
        <dbReference type="ChEBI" id="CHEBI:33019"/>
        <dbReference type="ChEBI" id="CHEBI:35235"/>
        <dbReference type="ChEBI" id="CHEBI:58886"/>
        <dbReference type="ChEBI" id="CHEBI:58887"/>
        <dbReference type="ChEBI" id="CHEBI:456215"/>
        <dbReference type="EC" id="6.3.1.13"/>
    </reaction>
</comment>
<comment type="cofactor">
    <cofactor evidence="1">
        <name>Zn(2+)</name>
        <dbReference type="ChEBI" id="CHEBI:29105"/>
    </cofactor>
    <text evidence="1">Binds 1 zinc ion per subunit.</text>
</comment>
<comment type="subunit">
    <text evidence="1">Monomer.</text>
</comment>
<comment type="similarity">
    <text evidence="2">Belongs to the class-I aminoacyl-tRNA synthetase family. MshC subfamily.</text>
</comment>
<organism>
    <name type="scientific">Corynebacterium glutamicum (strain ATCC 13032 / DSM 20300 / JCM 1318 / BCRC 11384 / CCUG 27702 / LMG 3730 / NBRC 12168 / NCIMB 10025 / NRRL B-2784 / 534)</name>
    <dbReference type="NCBI Taxonomy" id="196627"/>
    <lineage>
        <taxon>Bacteria</taxon>
        <taxon>Bacillati</taxon>
        <taxon>Actinomycetota</taxon>
        <taxon>Actinomycetes</taxon>
        <taxon>Mycobacteriales</taxon>
        <taxon>Corynebacteriaceae</taxon>
        <taxon>Corynebacterium</taxon>
    </lineage>
</organism>
<accession>Q8NQC4</accession>
<accession>Q6M572</accession>
<reference key="1">
    <citation type="journal article" date="2003" name="Appl. Microbiol. Biotechnol.">
        <title>The Corynebacterium glutamicum genome: features and impacts on biotechnological processes.</title>
        <authorList>
            <person name="Ikeda M."/>
            <person name="Nakagawa S."/>
        </authorList>
    </citation>
    <scope>NUCLEOTIDE SEQUENCE [LARGE SCALE GENOMIC DNA]</scope>
    <source>
        <strain>ATCC 13032 / DSM 20300 / JCM 1318 / BCRC 11384 / CCUG 27702 / LMG 3730 / NBRC 12168 / NCIMB 10025 / NRRL B-2784 / 534</strain>
    </source>
</reference>
<reference key="2">
    <citation type="journal article" date="2003" name="J. Biotechnol.">
        <title>The complete Corynebacterium glutamicum ATCC 13032 genome sequence and its impact on the production of L-aspartate-derived amino acids and vitamins.</title>
        <authorList>
            <person name="Kalinowski J."/>
            <person name="Bathe B."/>
            <person name="Bartels D."/>
            <person name="Bischoff N."/>
            <person name="Bott M."/>
            <person name="Burkovski A."/>
            <person name="Dusch N."/>
            <person name="Eggeling L."/>
            <person name="Eikmanns B.J."/>
            <person name="Gaigalat L."/>
            <person name="Goesmann A."/>
            <person name="Hartmann M."/>
            <person name="Huthmacher K."/>
            <person name="Kraemer R."/>
            <person name="Linke B."/>
            <person name="McHardy A.C."/>
            <person name="Meyer F."/>
            <person name="Moeckel B."/>
            <person name="Pfefferle W."/>
            <person name="Puehler A."/>
            <person name="Rey D.A."/>
            <person name="Rueckert C."/>
            <person name="Rupp O."/>
            <person name="Sahm H."/>
            <person name="Wendisch V.F."/>
            <person name="Wiegraebe I."/>
            <person name="Tauch A."/>
        </authorList>
    </citation>
    <scope>NUCLEOTIDE SEQUENCE [LARGE SCALE GENOMIC DNA]</scope>
    <source>
        <strain>ATCC 13032 / DSM 20300 / JCM 1318 / BCRC 11384 / CCUG 27702 / LMG 3730 / NBRC 12168 / NCIMB 10025 / NRRL B-2784 / 534</strain>
    </source>
</reference>